<gene>
    <name type="ORF">PGUG_01389</name>
</gene>
<proteinExistence type="inferred from homology"/>
<name>PFF1_PICGU</name>
<reference key="1">
    <citation type="journal article" date="2009" name="Nature">
        <title>Evolution of pathogenicity and sexual reproduction in eight Candida genomes.</title>
        <authorList>
            <person name="Butler G."/>
            <person name="Rasmussen M.D."/>
            <person name="Lin M.F."/>
            <person name="Santos M.A.S."/>
            <person name="Sakthikumar S."/>
            <person name="Munro C.A."/>
            <person name="Rheinbay E."/>
            <person name="Grabherr M."/>
            <person name="Forche A."/>
            <person name="Reedy J.L."/>
            <person name="Agrafioti I."/>
            <person name="Arnaud M.B."/>
            <person name="Bates S."/>
            <person name="Brown A.J.P."/>
            <person name="Brunke S."/>
            <person name="Costanzo M.C."/>
            <person name="Fitzpatrick D.A."/>
            <person name="de Groot P.W.J."/>
            <person name="Harris D."/>
            <person name="Hoyer L.L."/>
            <person name="Hube B."/>
            <person name="Klis F.M."/>
            <person name="Kodira C."/>
            <person name="Lennard N."/>
            <person name="Logue M.E."/>
            <person name="Martin R."/>
            <person name="Neiman A.M."/>
            <person name="Nikolaou E."/>
            <person name="Quail M.A."/>
            <person name="Quinn J."/>
            <person name="Santos M.C."/>
            <person name="Schmitzberger F.F."/>
            <person name="Sherlock G."/>
            <person name="Shah P."/>
            <person name="Silverstein K.A.T."/>
            <person name="Skrzypek M.S."/>
            <person name="Soll D."/>
            <person name="Staggs R."/>
            <person name="Stansfield I."/>
            <person name="Stumpf M.P.H."/>
            <person name="Sudbery P.E."/>
            <person name="Srikantha T."/>
            <person name="Zeng Q."/>
            <person name="Berman J."/>
            <person name="Berriman M."/>
            <person name="Heitman J."/>
            <person name="Gow N.A.R."/>
            <person name="Lorenz M.C."/>
            <person name="Birren B.W."/>
            <person name="Kellis M."/>
            <person name="Cuomo C.A."/>
        </authorList>
    </citation>
    <scope>NUCLEOTIDE SEQUENCE [LARGE SCALE GENOMIC DNA]</scope>
    <source>
        <strain>ATCC 6260 / CBS 566 / DSM 6381 / JCM 1539 / NBRC 10279 / NRRL Y-324</strain>
    </source>
</reference>
<keyword id="KW-0325">Glycoprotein</keyword>
<keyword id="KW-0378">Hydrolase</keyword>
<keyword id="KW-0472">Membrane</keyword>
<keyword id="KW-0479">Metal-binding</keyword>
<keyword id="KW-0482">Metalloprotease</keyword>
<keyword id="KW-0645">Protease</keyword>
<keyword id="KW-1185">Reference proteome</keyword>
<keyword id="KW-0812">Transmembrane</keyword>
<keyword id="KW-1133">Transmembrane helix</keyword>
<keyword id="KW-0926">Vacuole</keyword>
<keyword id="KW-0862">Zinc</keyword>
<evidence type="ECO:0000250" key="1">
    <source>
        <dbReference type="UniProtKB" id="P38244"/>
    </source>
</evidence>
<evidence type="ECO:0000250" key="2">
    <source>
        <dbReference type="UniProtKB" id="P80561"/>
    </source>
</evidence>
<evidence type="ECO:0000255" key="3"/>
<evidence type="ECO:0000255" key="4">
    <source>
        <dbReference type="PROSITE-ProRule" id="PRU00498"/>
    </source>
</evidence>
<evidence type="ECO:0000256" key="5">
    <source>
        <dbReference type="SAM" id="MobiDB-lite"/>
    </source>
</evidence>
<evidence type="ECO:0000305" key="6"/>
<dbReference type="EC" id="3.4.-.-" evidence="6"/>
<dbReference type="EMBL" id="CH408156">
    <property type="protein sequence ID" value="EDK37291.2"/>
    <property type="molecule type" value="Genomic_DNA"/>
</dbReference>
<dbReference type="RefSeq" id="XP_001485718.2">
    <property type="nucleotide sequence ID" value="XM_001485668.1"/>
</dbReference>
<dbReference type="SMR" id="A5DDN8"/>
<dbReference type="FunCoup" id="A5DDN8">
    <property type="interactions" value="10"/>
</dbReference>
<dbReference type="STRING" id="294746.A5DDN8"/>
<dbReference type="GeneID" id="5128270"/>
<dbReference type="KEGG" id="pgu:PGUG_01389"/>
<dbReference type="eggNOG" id="KOG2194">
    <property type="taxonomic scope" value="Eukaryota"/>
</dbReference>
<dbReference type="HOGENOM" id="CLU_006412_1_0_1"/>
<dbReference type="InParanoid" id="A5DDN8"/>
<dbReference type="OMA" id="TPWPVTI"/>
<dbReference type="OrthoDB" id="76293at2759"/>
<dbReference type="Proteomes" id="UP000001997">
    <property type="component" value="Unassembled WGS sequence"/>
</dbReference>
<dbReference type="GO" id="GO:0005774">
    <property type="term" value="C:vacuolar membrane"/>
    <property type="evidence" value="ECO:0007669"/>
    <property type="project" value="UniProtKB-SubCell"/>
</dbReference>
<dbReference type="GO" id="GO:0046872">
    <property type="term" value="F:metal ion binding"/>
    <property type="evidence" value="ECO:0007669"/>
    <property type="project" value="UniProtKB-KW"/>
</dbReference>
<dbReference type="GO" id="GO:0008235">
    <property type="term" value="F:metalloexopeptidase activity"/>
    <property type="evidence" value="ECO:0007669"/>
    <property type="project" value="InterPro"/>
</dbReference>
<dbReference type="GO" id="GO:0006508">
    <property type="term" value="P:proteolysis"/>
    <property type="evidence" value="ECO:0007669"/>
    <property type="project" value="UniProtKB-KW"/>
</dbReference>
<dbReference type="CDD" id="cd03875">
    <property type="entry name" value="M28_Fxna_like"/>
    <property type="match status" value="1"/>
</dbReference>
<dbReference type="Gene3D" id="3.40.630.10">
    <property type="entry name" value="Zn peptidases"/>
    <property type="match status" value="1"/>
</dbReference>
<dbReference type="InterPro" id="IPR048024">
    <property type="entry name" value="Fxna-like_M28_dom"/>
</dbReference>
<dbReference type="InterPro" id="IPR045175">
    <property type="entry name" value="M28_fam"/>
</dbReference>
<dbReference type="InterPro" id="IPR007484">
    <property type="entry name" value="Peptidase_M28"/>
</dbReference>
<dbReference type="InterPro" id="IPR053975">
    <property type="entry name" value="PFF1_C"/>
</dbReference>
<dbReference type="InterPro" id="IPR053976">
    <property type="entry name" value="PFF1_TM"/>
</dbReference>
<dbReference type="PANTHER" id="PTHR12147">
    <property type="entry name" value="METALLOPEPTIDASE M28 FAMILY MEMBER"/>
    <property type="match status" value="1"/>
</dbReference>
<dbReference type="PANTHER" id="PTHR12147:SF58">
    <property type="entry name" value="VACUOLAR MEMBRANE PROTEASE"/>
    <property type="match status" value="1"/>
</dbReference>
<dbReference type="Pfam" id="PF04389">
    <property type="entry name" value="Peptidase_M28"/>
    <property type="match status" value="1"/>
</dbReference>
<dbReference type="Pfam" id="PF22250">
    <property type="entry name" value="PFF1_C"/>
    <property type="match status" value="1"/>
</dbReference>
<dbReference type="Pfam" id="PF22251">
    <property type="entry name" value="PFF1_TM"/>
    <property type="match status" value="2"/>
</dbReference>
<dbReference type="SUPFAM" id="SSF53187">
    <property type="entry name" value="Zn-dependent exopeptidases"/>
    <property type="match status" value="1"/>
</dbReference>
<protein>
    <recommendedName>
        <fullName evidence="1">Vacuolar membrane protease</fullName>
        <ecNumber evidence="6">3.4.-.-</ecNumber>
    </recommendedName>
    <alternativeName>
        <fullName evidence="1">FXNA-related family protease 1</fullName>
    </alternativeName>
</protein>
<sequence>MTTADSNSSATRGSHEMADGSNRVPNDEPYHRKSPESCENANFFVRAMRASFGYRKTSLTILVFLSVIATVLLSYYDSSLEFSVSLPTDKSESKILDHSWDVLQEIARDEHTYASEANDRVHDYLEDIIGFLVDKKSYMEYDNDLNNTHSFLRQTAPSTVTYYESNNLIVRINGSDPELPALLLSAHYDSVPSSFGVTDDGMGIASLIGILNYFSAKQTSQPARTIIINFNNNEEFGLYGALAFLSHPWFKQIKYFLNLEGTGAGGKAILFRGTDYGFAKYFKNVRFPYASSLFQQAFSARLVHSETDYKYYAELGHLRGLDLAFFRPRDMYHTAKDNIANVNKKSLWHMLSSTIDFTNGVVGGEIDLDVEAKQKEAAAFTSIFNYFFVVPMTFVFGVNVLLMVLVPLVSLISLALIFAHRKWSVSLVTFFKFPLSFILSIFLLDNFSSWFVVSVNNFLPNSSAGIIALTYFSFFVLANYLLLNGINLLFWKFKGTRHDEKLVVILQISFMFWVSLIWSTANIAKSQFNGEHSGEFLLTLLYILQAAGGVFGLLCWLFKRSRTVHTNNQELEPLLEHAVEEGYGAHVEQEGHISSSASSAISVNVIESPPPTKHYSYDWSIQFLFIVPISSFLSYNYGWLILEGLKKTLQESATSEYLVFRALKLLAVVVAVPYLPFIFKVNRIVFLVTIFLFVYGLGAIVISEPFTEANPLKLRFLQTIDLDNSPKSNLVSASGRANSSIAEILRDLPSVKESETEVVCNAKADGMTICNYEGLNPHLAPGTKNAQDLLSVKVLSNSSSSINYPFGMLSGKFEIRAEKNRECRLSFREDTGGKRSSGVVKTVVVYKNDLKNSNKVNAMKAPEGFSQDDYGNFVYKNMTGISDLKLNKLDWNRPYRIGVEWVASLDDSDTQPTLKVSVDCYWAEIGQIAEKGKIVDRIPAYTELLHYSPNYVTWANLDQGLVNVKKSVLV</sequence>
<organism>
    <name type="scientific">Meyerozyma guilliermondii (strain ATCC 6260 / CBS 566 / DSM 6381 / JCM 1539 / NBRC 10279 / NRRL Y-324)</name>
    <name type="common">Yeast</name>
    <name type="synonym">Candida guilliermondii</name>
    <dbReference type="NCBI Taxonomy" id="294746"/>
    <lineage>
        <taxon>Eukaryota</taxon>
        <taxon>Fungi</taxon>
        <taxon>Dikarya</taxon>
        <taxon>Ascomycota</taxon>
        <taxon>Saccharomycotina</taxon>
        <taxon>Pichiomycetes</taxon>
        <taxon>Debaryomycetaceae</taxon>
        <taxon>Meyerozyma</taxon>
    </lineage>
</organism>
<feature type="chain" id="PRO_0000411734" description="Vacuolar membrane protease">
    <location>
        <begin position="1"/>
        <end position="970"/>
    </location>
</feature>
<feature type="topological domain" description="Cytoplasmic" evidence="1">
    <location>
        <begin position="1"/>
        <end position="56"/>
    </location>
</feature>
<feature type="transmembrane region" description="Helical; Name=1" evidence="3">
    <location>
        <begin position="57"/>
        <end position="77"/>
    </location>
</feature>
<feature type="topological domain" description="Vacuolar" evidence="1">
    <location>
        <begin position="78"/>
        <end position="397"/>
    </location>
</feature>
<feature type="transmembrane region" description="Helical; Name=2" evidence="3">
    <location>
        <begin position="398"/>
        <end position="418"/>
    </location>
</feature>
<feature type="topological domain" description="Cytoplasmic" evidence="1">
    <location>
        <begin position="419"/>
        <end position="423"/>
    </location>
</feature>
<feature type="transmembrane region" description="Helical; Name=3" evidence="3">
    <location>
        <begin position="424"/>
        <end position="444"/>
    </location>
</feature>
<feature type="topological domain" description="Vacuolar" evidence="1">
    <location>
        <begin position="445"/>
        <end position="465"/>
    </location>
</feature>
<feature type="transmembrane region" description="Helical; Name=4" evidence="3">
    <location>
        <begin position="466"/>
        <end position="486"/>
    </location>
</feature>
<feature type="topological domain" description="Cytoplasmic" evidence="1">
    <location>
        <begin position="487"/>
        <end position="502"/>
    </location>
</feature>
<feature type="transmembrane region" description="Helical; Name=5" evidence="3">
    <location>
        <begin position="503"/>
        <end position="523"/>
    </location>
</feature>
<feature type="topological domain" description="Vacuolar" evidence="1">
    <location>
        <begin position="524"/>
        <end position="535"/>
    </location>
</feature>
<feature type="transmembrane region" description="Helical; Name=6" evidence="3">
    <location>
        <begin position="536"/>
        <end position="556"/>
    </location>
</feature>
<feature type="topological domain" description="Cytoplasmic" evidence="1">
    <location>
        <begin position="557"/>
        <end position="620"/>
    </location>
</feature>
<feature type="transmembrane region" description="Helical; Name=7" evidence="3">
    <location>
        <begin position="621"/>
        <end position="641"/>
    </location>
</feature>
<feature type="topological domain" description="Vacuolar" evidence="1">
    <location>
        <begin position="642"/>
        <end position="658"/>
    </location>
</feature>
<feature type="transmembrane region" description="Helical; Name=8" evidence="3">
    <location>
        <begin position="659"/>
        <end position="679"/>
    </location>
</feature>
<feature type="topological domain" description="Cytoplasmic" evidence="1">
    <location>
        <begin position="680"/>
        <end position="683"/>
    </location>
</feature>
<feature type="transmembrane region" description="Helical; Name=9" evidence="3">
    <location>
        <begin position="684"/>
        <end position="704"/>
    </location>
</feature>
<feature type="topological domain" description="Vacuolar" evidence="1">
    <location>
        <begin position="705"/>
        <end position="970"/>
    </location>
</feature>
<feature type="region of interest" description="Disordered" evidence="5">
    <location>
        <begin position="1"/>
        <end position="35"/>
    </location>
</feature>
<feature type="compositionally biased region" description="Polar residues" evidence="5">
    <location>
        <begin position="1"/>
        <end position="12"/>
    </location>
</feature>
<feature type="compositionally biased region" description="Basic and acidic residues" evidence="5">
    <location>
        <begin position="25"/>
        <end position="35"/>
    </location>
</feature>
<feature type="active site" description="Proton acceptor" evidence="2">
    <location>
        <position position="234"/>
    </location>
</feature>
<feature type="binding site" evidence="2">
    <location>
        <position position="187"/>
    </location>
    <ligand>
        <name>Zn(2+)</name>
        <dbReference type="ChEBI" id="CHEBI:29105"/>
        <label>1</label>
        <note>catalytic</note>
    </ligand>
</feature>
<feature type="binding site" evidence="2">
    <location>
        <position position="199"/>
    </location>
    <ligand>
        <name>Zn(2+)</name>
        <dbReference type="ChEBI" id="CHEBI:29105"/>
        <label>1</label>
        <note>catalytic</note>
    </ligand>
</feature>
<feature type="binding site" evidence="2">
    <location>
        <position position="199"/>
    </location>
    <ligand>
        <name>Zn(2+)</name>
        <dbReference type="ChEBI" id="CHEBI:29105"/>
        <label>2</label>
        <note>catalytic</note>
    </ligand>
</feature>
<feature type="binding site" evidence="2">
    <location>
        <position position="235"/>
    </location>
    <ligand>
        <name>Zn(2+)</name>
        <dbReference type="ChEBI" id="CHEBI:29105"/>
        <label>2</label>
        <note>catalytic</note>
    </ligand>
</feature>
<feature type="binding site" evidence="2">
    <location>
        <position position="260"/>
    </location>
    <ligand>
        <name>Zn(2+)</name>
        <dbReference type="ChEBI" id="CHEBI:29105"/>
        <label>1</label>
        <note>catalytic</note>
    </ligand>
</feature>
<feature type="binding site" evidence="2">
    <location>
        <position position="333"/>
    </location>
    <ligand>
        <name>Zn(2+)</name>
        <dbReference type="ChEBI" id="CHEBI:29105"/>
        <label>2</label>
        <note>catalytic</note>
    </ligand>
</feature>
<feature type="site" description="Transition state stabilizer" evidence="2">
    <location>
        <position position="332"/>
    </location>
</feature>
<feature type="glycosylation site" description="N-linked (GlcNAc...) asparagine" evidence="4">
    <location>
        <position position="146"/>
    </location>
</feature>
<feature type="glycosylation site" description="N-linked (GlcNAc...) asparagine" evidence="4">
    <location>
        <position position="173"/>
    </location>
</feature>
<feature type="glycosylation site" description="N-linked (GlcNAc...) asparagine" evidence="4">
    <location>
        <position position="446"/>
    </location>
</feature>
<feature type="glycosylation site" description="N-linked (GlcNAc...) asparagine" evidence="4">
    <location>
        <position position="461"/>
    </location>
</feature>
<feature type="glycosylation site" description="N-linked (GlcNAc...) asparagine" evidence="4">
    <location>
        <position position="738"/>
    </location>
</feature>
<feature type="glycosylation site" description="N-linked (GlcNAc...) asparagine" evidence="4">
    <location>
        <position position="797"/>
    </location>
</feature>
<feature type="glycosylation site" description="N-linked (GlcNAc...) asparagine" evidence="4">
    <location>
        <position position="877"/>
    </location>
</feature>
<accession>A5DDN8</accession>
<comment type="function">
    <text evidence="1">May be involved in vacuolar sorting and osmoregulation.</text>
</comment>
<comment type="cofactor">
    <cofactor evidence="2">
        <name>Zn(2+)</name>
        <dbReference type="ChEBI" id="CHEBI:29105"/>
    </cofactor>
    <text evidence="2">Binds 2 Zn(2+) ions per subunit.</text>
</comment>
<comment type="subcellular location">
    <subcellularLocation>
        <location evidence="1">Vacuole membrane</location>
        <topology evidence="3">Multi-pass membrane protein</topology>
    </subcellularLocation>
</comment>
<comment type="similarity">
    <text evidence="6">Belongs to the peptidase M28 family.</text>
</comment>